<keyword id="KW-0148">Chlorophyll</keyword>
<keyword id="KW-0157">Chromophore</keyword>
<keyword id="KW-0472">Membrane</keyword>
<keyword id="KW-0602">Photosynthesis</keyword>
<keyword id="KW-0603">Photosystem I</keyword>
<keyword id="KW-0604">Photosystem II</keyword>
<keyword id="KW-1185">Reference proteome</keyword>
<keyword id="KW-0793">Thylakoid</keyword>
<keyword id="KW-0812">Transmembrane</keyword>
<keyword id="KW-1133">Transmembrane helix</keyword>
<proteinExistence type="inferred from homology"/>
<dbReference type="EMBL" id="CP000095">
    <property type="protein sequence ID" value="AAZ58210.1"/>
    <property type="molecule type" value="Genomic_DNA"/>
</dbReference>
<dbReference type="RefSeq" id="WP_011294808.1">
    <property type="nucleotide sequence ID" value="NC_007335.2"/>
</dbReference>
<dbReference type="SMR" id="Q46JW8"/>
<dbReference type="STRING" id="59920.PMN2A_0719"/>
<dbReference type="KEGG" id="pmn:PMN2A_0719"/>
<dbReference type="HOGENOM" id="CLU_028310_0_0_3"/>
<dbReference type="OrthoDB" id="9429529at2"/>
<dbReference type="PhylomeDB" id="Q46JW8"/>
<dbReference type="Proteomes" id="UP000002535">
    <property type="component" value="Chromosome"/>
</dbReference>
<dbReference type="GO" id="GO:0009522">
    <property type="term" value="C:photosystem I"/>
    <property type="evidence" value="ECO:0007669"/>
    <property type="project" value="UniProtKB-KW"/>
</dbReference>
<dbReference type="GO" id="GO:0009523">
    <property type="term" value="C:photosystem II"/>
    <property type="evidence" value="ECO:0007669"/>
    <property type="project" value="UniProtKB-KW"/>
</dbReference>
<dbReference type="GO" id="GO:0031676">
    <property type="term" value="C:plasma membrane-derived thylakoid membrane"/>
    <property type="evidence" value="ECO:0007669"/>
    <property type="project" value="UniProtKB-SubCell"/>
</dbReference>
<dbReference type="GO" id="GO:0016168">
    <property type="term" value="F:chlorophyll binding"/>
    <property type="evidence" value="ECO:0007669"/>
    <property type="project" value="UniProtKB-KW"/>
</dbReference>
<dbReference type="GO" id="GO:0009767">
    <property type="term" value="P:photosynthetic electron transport chain"/>
    <property type="evidence" value="ECO:0007669"/>
    <property type="project" value="InterPro"/>
</dbReference>
<dbReference type="InterPro" id="IPR000932">
    <property type="entry name" value="PS_antenna-like"/>
</dbReference>
<dbReference type="InterPro" id="IPR036001">
    <property type="entry name" value="PS_II_antenna-like_sf"/>
</dbReference>
<dbReference type="NCBIfam" id="TIGR03041">
    <property type="entry name" value="PS_antenn_a_b"/>
    <property type="match status" value="1"/>
</dbReference>
<dbReference type="Pfam" id="PF00421">
    <property type="entry name" value="PSII"/>
    <property type="match status" value="1"/>
</dbReference>
<dbReference type="SUPFAM" id="SSF161077">
    <property type="entry name" value="Photosystem II antenna protein-like"/>
    <property type="match status" value="1"/>
</dbReference>
<gene>
    <name type="primary">pcbE</name>
    <name type="ordered locus">PMN2A_0719</name>
</gene>
<sequence>MQTYGNPDVTYGWWAGNAGVTNKSGKFIAAHIAHTGLIAFAAGGSTLWELARYNPEIPMGHQSSIFLAHLASIGIGFDEAGAWTGAGVASIAIVHLVLSMVYGAGGLLHSVLFVGDMQDSEVPQARKFKLEWDNPDNQTFILGHHLLFFGVACIWFVEWARIHGIYDPAIGAVRQVEYNLNLTSIWNHQFDFLAIDSLEDVLGGHAFLAFLEITGGAFHIATKQVGEYTKFKGAGLLSAEAILSFSCAGLGWMAVVAAFWCAQNTTVYPEAWYGEALILKFGIAPYWIDSVDLSGGPAFFGHTTRAALANVHYYFGFFFLQGHLWHALRAMGFDFKRILKEPLPAQLYE</sequence>
<name>PCBE_PROMT</name>
<feature type="chain" id="PRO_0000077553" description="Divinyl chlorophyll a/b light-harvesting protein PcbE">
    <location>
        <begin position="1"/>
        <end position="349"/>
    </location>
</feature>
<feature type="transmembrane region" description="Helical" evidence="3">
    <location>
        <begin position="27"/>
        <end position="47"/>
    </location>
</feature>
<feature type="transmembrane region" description="Helical" evidence="3">
    <location>
        <begin position="65"/>
        <end position="85"/>
    </location>
</feature>
<feature type="transmembrane region" description="Helical" evidence="3">
    <location>
        <begin position="88"/>
        <end position="108"/>
    </location>
</feature>
<feature type="transmembrane region" description="Helical" evidence="3">
    <location>
        <begin position="201"/>
        <end position="221"/>
    </location>
</feature>
<feature type="transmembrane region" description="Helical" evidence="3">
    <location>
        <begin position="241"/>
        <end position="261"/>
    </location>
</feature>
<feature type="transmembrane region" description="Helical" evidence="3">
    <location>
        <begin position="308"/>
        <end position="328"/>
    </location>
</feature>
<accession>Q46JW8</accession>
<protein>
    <recommendedName>
        <fullName>Divinyl chlorophyll a/b light-harvesting protein PcbE</fullName>
    </recommendedName>
</protein>
<comment type="function">
    <text evidence="2">The antenna complex functions as a light receptor, it captures and delivers excitation energy to photosystems II and I. The Prochlorales pcb genes are not related to higher plant LHCs.</text>
</comment>
<comment type="cofactor">
    <cofactor evidence="2">
        <name>divinyl chlorophyll a</name>
        <dbReference type="ChEBI" id="CHEBI:73095"/>
    </cofactor>
</comment>
<comment type="cofactor">
    <cofactor evidence="2">
        <name>divinyl chlorophyll b</name>
        <dbReference type="ChEBI" id="CHEBI:73096"/>
    </cofactor>
</comment>
<comment type="subunit">
    <text evidence="2">The antenna complex consists of divinyl chlorophylls (a and b) and divinyl chlorophyll a/b binding proteins and binds more divinyl chlorophyll b than does the antenna complex from high-light-adapted Prochlorococcus.</text>
</comment>
<comment type="subcellular location">
    <subcellularLocation>
        <location evidence="2">Cellular thylakoid membrane</location>
        <topology evidence="1">Multi-pass membrane protein</topology>
    </subcellularLocation>
</comment>
<comment type="miscellaneous">
    <text evidence="4">This low-light-adapted strain contains 7 pcb genes.</text>
</comment>
<comment type="similarity">
    <text evidence="5">Belongs to the PsbB/PsbC family. IsiA/Pcb subfamily.</text>
</comment>
<reference key="1">
    <citation type="journal article" date="2007" name="PLoS Genet.">
        <title>Patterns and implications of gene gain and loss in the evolution of Prochlorococcus.</title>
        <authorList>
            <person name="Kettler G.C."/>
            <person name="Martiny A.C."/>
            <person name="Huang K."/>
            <person name="Zucker J."/>
            <person name="Coleman M.L."/>
            <person name="Rodrigue S."/>
            <person name="Chen F."/>
            <person name="Lapidus A."/>
            <person name="Ferriera S."/>
            <person name="Johnson J."/>
            <person name="Steglich C."/>
            <person name="Church G.M."/>
            <person name="Richardson P."/>
            <person name="Chisholm S.W."/>
        </authorList>
    </citation>
    <scope>NUCLEOTIDE SEQUENCE [LARGE SCALE GENOMIC DNA]</scope>
    <source>
        <strain>NATL2A</strain>
    </source>
</reference>
<evidence type="ECO:0000250" key="1"/>
<evidence type="ECO:0000250" key="2">
    <source>
        <dbReference type="UniProtKB" id="Q6Q972"/>
    </source>
</evidence>
<evidence type="ECO:0000255" key="3"/>
<evidence type="ECO:0000303" key="4">
    <source>
    </source>
</evidence>
<evidence type="ECO:0000305" key="5"/>
<organism>
    <name type="scientific">Prochlorococcus marinus (strain NATL2A)</name>
    <dbReference type="NCBI Taxonomy" id="59920"/>
    <lineage>
        <taxon>Bacteria</taxon>
        <taxon>Bacillati</taxon>
        <taxon>Cyanobacteriota</taxon>
        <taxon>Cyanophyceae</taxon>
        <taxon>Synechococcales</taxon>
        <taxon>Prochlorococcaceae</taxon>
        <taxon>Prochlorococcus</taxon>
    </lineage>
</organism>